<name>ATPA2_BURTA</name>
<feature type="chain" id="PRO_0000238225" description="ATP synthase subunit alpha 2">
    <location>
        <begin position="1"/>
        <end position="556"/>
    </location>
</feature>
<feature type="region of interest" description="Disordered" evidence="2">
    <location>
        <begin position="514"/>
        <end position="556"/>
    </location>
</feature>
<feature type="compositionally biased region" description="Low complexity" evidence="2">
    <location>
        <begin position="546"/>
        <end position="556"/>
    </location>
</feature>
<feature type="binding site" evidence="1">
    <location>
        <begin position="177"/>
        <end position="184"/>
    </location>
    <ligand>
        <name>ATP</name>
        <dbReference type="ChEBI" id="CHEBI:30616"/>
    </ligand>
</feature>
<feature type="site" description="Required for activity" evidence="1">
    <location>
        <position position="370"/>
    </location>
</feature>
<proteinExistence type="inferred from homology"/>
<accession>Q2T873</accession>
<sequence length="556" mass="58506">MTQTPDATGAAADARWLARRRGALACVALAPVAQALGRVERVADGIAFVSGLEDAMLNEVLRFDGGVTGFAHTLDEDLISVVLLDPDAGVQAQTAVTRTGAVLEVPVGPQLLGRVVDPLGRPLDGGAPLGTADTLPIERPAPEIIERDLVSEPLDTGVLIVDALFTIGRGQRELIIGDRATGKTSLAIDAIVNQRHSDVICVYVAIGQRASAVRRVIDAVRRYGAPERCIFVVAPAACAPGLQWIAPFAGFSVAEYFRDRGQHALVVVDDLTKHAATHRELALLTREPPGREAYPGDIFYVHARLLERAAKLSAKLGGGSLSALPIAETDAGNLAAYIPTNLISITDGQIVLDSALFAANQRPAVDVGLSVSRVGGKAQHPALRAASGRLRLDYAQFLELEAFTRFGGLTDARLRAQITRGERIRALITQPRFRALRTLDEVVLLKALAAGVLDAMSPDLVAPLRERLPSWLDARLAPPRDRLADDAALSMLAESIGELVERVAADAAHRAAAGGHAEDAADDMGGALDGEHASGDATSIAPTPPGGAEAGAPRKR</sequence>
<protein>
    <recommendedName>
        <fullName evidence="1">ATP synthase subunit alpha 2</fullName>
        <ecNumber evidence="1">7.1.2.2</ecNumber>
    </recommendedName>
    <alternativeName>
        <fullName evidence="1">ATP synthase F1 sector subunit alpha 2</fullName>
    </alternativeName>
    <alternativeName>
        <fullName evidence="1">F-ATPase subunit alpha 2</fullName>
    </alternativeName>
</protein>
<keyword id="KW-0066">ATP synthesis</keyword>
<keyword id="KW-0067">ATP-binding</keyword>
<keyword id="KW-0997">Cell inner membrane</keyword>
<keyword id="KW-1003">Cell membrane</keyword>
<keyword id="KW-0139">CF(1)</keyword>
<keyword id="KW-0375">Hydrogen ion transport</keyword>
<keyword id="KW-0406">Ion transport</keyword>
<keyword id="KW-0472">Membrane</keyword>
<keyword id="KW-0547">Nucleotide-binding</keyword>
<keyword id="KW-1278">Translocase</keyword>
<keyword id="KW-0813">Transport</keyword>
<dbReference type="EC" id="7.1.2.2" evidence="1"/>
<dbReference type="EMBL" id="CP000085">
    <property type="protein sequence ID" value="ABC36034.1"/>
    <property type="molecule type" value="Genomic_DNA"/>
</dbReference>
<dbReference type="RefSeq" id="WP_009895348.1">
    <property type="nucleotide sequence ID" value="NZ_CM000439.1"/>
</dbReference>
<dbReference type="SMR" id="Q2T873"/>
<dbReference type="KEGG" id="bte:BTH_II0426"/>
<dbReference type="HOGENOM" id="CLU_010091_4_0_4"/>
<dbReference type="Proteomes" id="UP000001930">
    <property type="component" value="Chromosome II"/>
</dbReference>
<dbReference type="GO" id="GO:0005886">
    <property type="term" value="C:plasma membrane"/>
    <property type="evidence" value="ECO:0007669"/>
    <property type="project" value="UniProtKB-SubCell"/>
</dbReference>
<dbReference type="GO" id="GO:0045259">
    <property type="term" value="C:proton-transporting ATP synthase complex"/>
    <property type="evidence" value="ECO:0007669"/>
    <property type="project" value="UniProtKB-KW"/>
</dbReference>
<dbReference type="GO" id="GO:0043531">
    <property type="term" value="F:ADP binding"/>
    <property type="evidence" value="ECO:0007669"/>
    <property type="project" value="TreeGrafter"/>
</dbReference>
<dbReference type="GO" id="GO:0005524">
    <property type="term" value="F:ATP binding"/>
    <property type="evidence" value="ECO:0007669"/>
    <property type="project" value="UniProtKB-UniRule"/>
</dbReference>
<dbReference type="GO" id="GO:0046933">
    <property type="term" value="F:proton-transporting ATP synthase activity, rotational mechanism"/>
    <property type="evidence" value="ECO:0007669"/>
    <property type="project" value="UniProtKB-UniRule"/>
</dbReference>
<dbReference type="CDD" id="cd18113">
    <property type="entry name" value="ATP-synt_F1_alpha_C"/>
    <property type="match status" value="1"/>
</dbReference>
<dbReference type="CDD" id="cd18116">
    <property type="entry name" value="ATP-synt_F1_alpha_N"/>
    <property type="match status" value="1"/>
</dbReference>
<dbReference type="CDD" id="cd01132">
    <property type="entry name" value="F1-ATPase_alpha_CD"/>
    <property type="match status" value="1"/>
</dbReference>
<dbReference type="FunFam" id="3.40.50.300:FF:004039">
    <property type="entry name" value="ATP synthase subunit alpha, mitochondrial"/>
    <property type="match status" value="1"/>
</dbReference>
<dbReference type="Gene3D" id="2.40.30.20">
    <property type="match status" value="1"/>
</dbReference>
<dbReference type="Gene3D" id="1.20.150.20">
    <property type="entry name" value="ATP synthase alpha/beta chain, C-terminal domain"/>
    <property type="match status" value="1"/>
</dbReference>
<dbReference type="Gene3D" id="3.40.50.300">
    <property type="entry name" value="P-loop containing nucleotide triphosphate hydrolases"/>
    <property type="match status" value="1"/>
</dbReference>
<dbReference type="HAMAP" id="MF_01346">
    <property type="entry name" value="ATP_synth_alpha_bact"/>
    <property type="match status" value="1"/>
</dbReference>
<dbReference type="InterPro" id="IPR023366">
    <property type="entry name" value="ATP_synth_asu-like_sf"/>
</dbReference>
<dbReference type="InterPro" id="IPR000793">
    <property type="entry name" value="ATP_synth_asu_C"/>
</dbReference>
<dbReference type="InterPro" id="IPR038376">
    <property type="entry name" value="ATP_synth_asu_C_sf"/>
</dbReference>
<dbReference type="InterPro" id="IPR033732">
    <property type="entry name" value="ATP_synth_F1_a_nt-bd_dom"/>
</dbReference>
<dbReference type="InterPro" id="IPR005294">
    <property type="entry name" value="ATP_synth_F1_asu"/>
</dbReference>
<dbReference type="InterPro" id="IPR020003">
    <property type="entry name" value="ATPase_a/bsu_AS"/>
</dbReference>
<dbReference type="InterPro" id="IPR004100">
    <property type="entry name" value="ATPase_F1/V1/A1_a/bsu_N"/>
</dbReference>
<dbReference type="InterPro" id="IPR036121">
    <property type="entry name" value="ATPase_F1/V1/A1_a/bsu_N_sf"/>
</dbReference>
<dbReference type="InterPro" id="IPR000194">
    <property type="entry name" value="ATPase_F1/V1/A1_a/bsu_nucl-bd"/>
</dbReference>
<dbReference type="InterPro" id="IPR027417">
    <property type="entry name" value="P-loop_NTPase"/>
</dbReference>
<dbReference type="NCBIfam" id="TIGR00962">
    <property type="entry name" value="atpA"/>
    <property type="match status" value="1"/>
</dbReference>
<dbReference type="NCBIfam" id="NF009884">
    <property type="entry name" value="PRK13343.1"/>
    <property type="match status" value="1"/>
</dbReference>
<dbReference type="PANTHER" id="PTHR48082">
    <property type="entry name" value="ATP SYNTHASE SUBUNIT ALPHA, MITOCHONDRIAL"/>
    <property type="match status" value="1"/>
</dbReference>
<dbReference type="PANTHER" id="PTHR48082:SF2">
    <property type="entry name" value="ATP SYNTHASE SUBUNIT ALPHA, MITOCHONDRIAL"/>
    <property type="match status" value="1"/>
</dbReference>
<dbReference type="Pfam" id="PF00006">
    <property type="entry name" value="ATP-synt_ab"/>
    <property type="match status" value="1"/>
</dbReference>
<dbReference type="Pfam" id="PF00306">
    <property type="entry name" value="ATP-synt_ab_C"/>
    <property type="match status" value="1"/>
</dbReference>
<dbReference type="Pfam" id="PF02874">
    <property type="entry name" value="ATP-synt_ab_N"/>
    <property type="match status" value="1"/>
</dbReference>
<dbReference type="SUPFAM" id="SSF47917">
    <property type="entry name" value="C-terminal domain of alpha and beta subunits of F1 ATP synthase"/>
    <property type="match status" value="1"/>
</dbReference>
<dbReference type="SUPFAM" id="SSF50615">
    <property type="entry name" value="N-terminal domain of alpha and beta subunits of F1 ATP synthase"/>
    <property type="match status" value="1"/>
</dbReference>
<dbReference type="SUPFAM" id="SSF52540">
    <property type="entry name" value="P-loop containing nucleoside triphosphate hydrolases"/>
    <property type="match status" value="1"/>
</dbReference>
<dbReference type="PROSITE" id="PS00152">
    <property type="entry name" value="ATPASE_ALPHA_BETA"/>
    <property type="match status" value="1"/>
</dbReference>
<gene>
    <name evidence="1" type="primary">atpA2</name>
    <name type="synonym">atpA-2</name>
    <name type="ordered locus">BTH_II0426</name>
</gene>
<organism>
    <name type="scientific">Burkholderia thailandensis (strain ATCC 700388 / DSM 13276 / CCUG 48851 / CIP 106301 / E264)</name>
    <dbReference type="NCBI Taxonomy" id="271848"/>
    <lineage>
        <taxon>Bacteria</taxon>
        <taxon>Pseudomonadati</taxon>
        <taxon>Pseudomonadota</taxon>
        <taxon>Betaproteobacteria</taxon>
        <taxon>Burkholderiales</taxon>
        <taxon>Burkholderiaceae</taxon>
        <taxon>Burkholderia</taxon>
        <taxon>pseudomallei group</taxon>
    </lineage>
</organism>
<comment type="function">
    <text evidence="1">Produces ATP from ADP in the presence of a proton gradient across the membrane. The alpha chain is a regulatory subunit.</text>
</comment>
<comment type="catalytic activity">
    <reaction evidence="1">
        <text>ATP + H2O + 4 H(+)(in) = ADP + phosphate + 5 H(+)(out)</text>
        <dbReference type="Rhea" id="RHEA:57720"/>
        <dbReference type="ChEBI" id="CHEBI:15377"/>
        <dbReference type="ChEBI" id="CHEBI:15378"/>
        <dbReference type="ChEBI" id="CHEBI:30616"/>
        <dbReference type="ChEBI" id="CHEBI:43474"/>
        <dbReference type="ChEBI" id="CHEBI:456216"/>
        <dbReference type="EC" id="7.1.2.2"/>
    </reaction>
</comment>
<comment type="subunit">
    <text evidence="1">F-type ATPases have 2 components, CF(1) - the catalytic core - and CF(0) - the membrane proton channel. CF(1) has five subunits: alpha(3), beta(3), gamma(1), delta(1), epsilon(1). CF(0) has three main subunits: a(1), b(2) and c(9-12). The alpha and beta chains form an alternating ring which encloses part of the gamma chain. CF(1) is attached to CF(0) by a central stalk formed by the gamma and epsilon chains, while a peripheral stalk is formed by the delta and b chains.</text>
</comment>
<comment type="subcellular location">
    <subcellularLocation>
        <location evidence="1">Cell inner membrane</location>
        <topology evidence="1">Peripheral membrane protein</topology>
    </subcellularLocation>
</comment>
<comment type="similarity">
    <text evidence="1">Belongs to the ATPase alpha/beta chains family.</text>
</comment>
<reference key="1">
    <citation type="journal article" date="2005" name="BMC Genomics">
        <title>Bacterial genome adaptation to niches: divergence of the potential virulence genes in three Burkholderia species of different survival strategies.</title>
        <authorList>
            <person name="Kim H.S."/>
            <person name="Schell M.A."/>
            <person name="Yu Y."/>
            <person name="Ulrich R.L."/>
            <person name="Sarria S.H."/>
            <person name="Nierman W.C."/>
            <person name="DeShazer D."/>
        </authorList>
    </citation>
    <scope>NUCLEOTIDE SEQUENCE [LARGE SCALE GENOMIC DNA]</scope>
    <source>
        <strain>ATCC 700388 / DSM 13276 / CCUG 48851 / CIP 106301 / E264</strain>
    </source>
</reference>
<evidence type="ECO:0000255" key="1">
    <source>
        <dbReference type="HAMAP-Rule" id="MF_01346"/>
    </source>
</evidence>
<evidence type="ECO:0000256" key="2">
    <source>
        <dbReference type="SAM" id="MobiDB-lite"/>
    </source>
</evidence>